<feature type="peptide" id="PRO_0000424173" description="Bacteriocin BAC-IB17" evidence="1">
    <location>
        <begin position="1"/>
        <end position="15" status="greater than"/>
    </location>
</feature>
<feature type="non-terminal residue" evidence="2">
    <location>
        <position position="15"/>
    </location>
</feature>
<organism>
    <name type="scientific">Bacillus subtilis</name>
    <dbReference type="NCBI Taxonomy" id="1423"/>
    <lineage>
        <taxon>Bacteria</taxon>
        <taxon>Bacillati</taxon>
        <taxon>Bacillota</taxon>
        <taxon>Bacilli</taxon>
        <taxon>Bacillales</taxon>
        <taxon>Bacillaceae</taxon>
        <taxon>Bacillus</taxon>
    </lineage>
</organism>
<accession>C0HJE5</accession>
<protein>
    <recommendedName>
        <fullName evidence="2">Bacteriocin BAC-IB17</fullName>
    </recommendedName>
</protein>
<reference evidence="3" key="1">
    <citation type="submission" date="2013-08" db="UniProtKB">
        <title>Isolation, purification and characterization of bacteriocin (BAC-IB17) produced from Bacillus subtilis KIBGE-IB17.</title>
        <authorList>
            <person name="Ansari A."/>
            <person name="Siddiqui N.N."/>
            <person name="Zohra R.R."/>
            <person name="Aman A."/>
            <person name="Qader S.A."/>
        </authorList>
    </citation>
    <scope>PROTEIN SEQUENCE</scope>
    <scope>FUNCTION</scope>
    <scope>SUBCELLULAR LOCATION</scope>
    <source>
        <strain evidence="1">KIBGE-IB17</strain>
    </source>
</reference>
<dbReference type="GO" id="GO:0005576">
    <property type="term" value="C:extracellular region"/>
    <property type="evidence" value="ECO:0007669"/>
    <property type="project" value="UniProtKB-SubCell"/>
</dbReference>
<dbReference type="GO" id="GO:0042742">
    <property type="term" value="P:defense response to bacterium"/>
    <property type="evidence" value="ECO:0007669"/>
    <property type="project" value="UniProtKB-KW"/>
</dbReference>
<dbReference type="GO" id="GO:0031640">
    <property type="term" value="P:killing of cells of another organism"/>
    <property type="evidence" value="ECO:0007669"/>
    <property type="project" value="UniProtKB-KW"/>
</dbReference>
<comment type="function">
    <text evidence="1">Has bactericidal activity against Gram-positive bacteria M.luteus, methicillin-resistant S.aureus, methicillin-sensitive S.aureus and B.stearothermophilus as well as against the Gram-negative bacteria E.coli and S.typhi.</text>
</comment>
<comment type="subcellular location">
    <subcellularLocation>
        <location evidence="1">Secreted</location>
    </subcellularLocation>
</comment>
<comment type="miscellaneous">
    <text evidence="1">On the 2D-gel the determined pI of this protein is: 7.0, its MW is: 10.7 kDa.</text>
</comment>
<proteinExistence type="evidence at protein level"/>
<evidence type="ECO:0000269" key="1">
    <source ref="1"/>
</evidence>
<evidence type="ECO:0000303" key="2">
    <source ref="1"/>
</evidence>
<evidence type="ECO:0000305" key="3"/>
<keyword id="KW-0044">Antibiotic</keyword>
<keyword id="KW-0929">Antimicrobial</keyword>
<keyword id="KW-0078">Bacteriocin</keyword>
<keyword id="KW-0903">Direct protein sequencing</keyword>
<keyword id="KW-0964">Secreted</keyword>
<name>BCN17_BACIU</name>
<sequence length="15" mass="1618">NKPEALVDYTGVXNS</sequence>